<dbReference type="EC" id="6.3.1.5" evidence="1"/>
<dbReference type="EMBL" id="BA000038">
    <property type="protein sequence ID" value="BAC96436.1"/>
    <property type="molecule type" value="Genomic_DNA"/>
</dbReference>
<dbReference type="RefSeq" id="WP_011151796.1">
    <property type="nucleotide sequence ID" value="NC_005140.1"/>
</dbReference>
<dbReference type="SMR" id="Q7MFB0"/>
<dbReference type="STRING" id="672.VV93_v1c33960"/>
<dbReference type="KEGG" id="vvy:VVA0410"/>
<dbReference type="PATRIC" id="fig|196600.6.peg.3615"/>
<dbReference type="eggNOG" id="COG0171">
    <property type="taxonomic scope" value="Bacteria"/>
</dbReference>
<dbReference type="HOGENOM" id="CLU_059327_3_0_6"/>
<dbReference type="UniPathway" id="UPA00253">
    <property type="reaction ID" value="UER00333"/>
</dbReference>
<dbReference type="Proteomes" id="UP000002675">
    <property type="component" value="Chromosome II"/>
</dbReference>
<dbReference type="GO" id="GO:0005737">
    <property type="term" value="C:cytoplasm"/>
    <property type="evidence" value="ECO:0007669"/>
    <property type="project" value="InterPro"/>
</dbReference>
<dbReference type="GO" id="GO:0005524">
    <property type="term" value="F:ATP binding"/>
    <property type="evidence" value="ECO:0007669"/>
    <property type="project" value="UniProtKB-UniRule"/>
</dbReference>
<dbReference type="GO" id="GO:0004359">
    <property type="term" value="F:glutaminase activity"/>
    <property type="evidence" value="ECO:0007669"/>
    <property type="project" value="InterPro"/>
</dbReference>
<dbReference type="GO" id="GO:0046872">
    <property type="term" value="F:metal ion binding"/>
    <property type="evidence" value="ECO:0007669"/>
    <property type="project" value="UniProtKB-KW"/>
</dbReference>
<dbReference type="GO" id="GO:0003952">
    <property type="term" value="F:NAD+ synthase (glutamine-hydrolyzing) activity"/>
    <property type="evidence" value="ECO:0007669"/>
    <property type="project" value="InterPro"/>
</dbReference>
<dbReference type="GO" id="GO:0008795">
    <property type="term" value="F:NAD+ synthase activity"/>
    <property type="evidence" value="ECO:0007669"/>
    <property type="project" value="UniProtKB-UniRule"/>
</dbReference>
<dbReference type="GO" id="GO:0009435">
    <property type="term" value="P:NAD biosynthetic process"/>
    <property type="evidence" value="ECO:0007669"/>
    <property type="project" value="UniProtKB-UniRule"/>
</dbReference>
<dbReference type="CDD" id="cd00553">
    <property type="entry name" value="NAD_synthase"/>
    <property type="match status" value="1"/>
</dbReference>
<dbReference type="FunFam" id="3.40.50.620:FF:000015">
    <property type="entry name" value="NH(3)-dependent NAD(+) synthetase"/>
    <property type="match status" value="1"/>
</dbReference>
<dbReference type="Gene3D" id="3.40.50.620">
    <property type="entry name" value="HUPs"/>
    <property type="match status" value="1"/>
</dbReference>
<dbReference type="HAMAP" id="MF_00193">
    <property type="entry name" value="NadE_ammonia_dep"/>
    <property type="match status" value="1"/>
</dbReference>
<dbReference type="InterPro" id="IPR022310">
    <property type="entry name" value="NAD/GMP_synthase"/>
</dbReference>
<dbReference type="InterPro" id="IPR003694">
    <property type="entry name" value="NAD_synthase"/>
</dbReference>
<dbReference type="InterPro" id="IPR022926">
    <property type="entry name" value="NH(3)-dep_NAD(+)_synth"/>
</dbReference>
<dbReference type="InterPro" id="IPR014729">
    <property type="entry name" value="Rossmann-like_a/b/a_fold"/>
</dbReference>
<dbReference type="NCBIfam" id="TIGR00552">
    <property type="entry name" value="nadE"/>
    <property type="match status" value="1"/>
</dbReference>
<dbReference type="NCBIfam" id="NF001979">
    <property type="entry name" value="PRK00768.1"/>
    <property type="match status" value="1"/>
</dbReference>
<dbReference type="PANTHER" id="PTHR23090">
    <property type="entry name" value="NH 3 /GLUTAMINE-DEPENDENT NAD + SYNTHETASE"/>
    <property type="match status" value="1"/>
</dbReference>
<dbReference type="PANTHER" id="PTHR23090:SF7">
    <property type="entry name" value="NH(3)-DEPENDENT NAD(+) SYNTHETASE"/>
    <property type="match status" value="1"/>
</dbReference>
<dbReference type="Pfam" id="PF02540">
    <property type="entry name" value="NAD_synthase"/>
    <property type="match status" value="1"/>
</dbReference>
<dbReference type="SUPFAM" id="SSF52402">
    <property type="entry name" value="Adenine nucleotide alpha hydrolases-like"/>
    <property type="match status" value="1"/>
</dbReference>
<sequence length="276" mass="30035">MEQLIRDEMRVLPTIDPHFEIERRVAFIKKKLVESGCKSLVLGISGGVDSTTCGRLAQVAVDQLNQESNSNDYQFVAVRLPYGEQKDEEEAQLALSFIQPTHSVSVNIKAGVDGLHAASHVALEGTGLIPQDAAKVDFVKGNVKARARMVAQYEIAGYVGGLVLGTDHSAENITGFYTKFGDGACDLAPLFGLSKRQVRLVAETLGAPELLVKKVPTADLEELAPQKADEDALNLTYEQIDDFLEGKPVSEAVSARLVSIYKATQHKRQPIPTIYD</sequence>
<protein>
    <recommendedName>
        <fullName evidence="1">NH(3)-dependent NAD(+) synthetase</fullName>
        <ecNumber evidence="1">6.3.1.5</ecNumber>
    </recommendedName>
</protein>
<keyword id="KW-0067">ATP-binding</keyword>
<keyword id="KW-0436">Ligase</keyword>
<keyword id="KW-0460">Magnesium</keyword>
<keyword id="KW-0479">Metal-binding</keyword>
<keyword id="KW-0520">NAD</keyword>
<keyword id="KW-0547">Nucleotide-binding</keyword>
<comment type="function">
    <text evidence="1">Catalyzes the ATP-dependent amidation of deamido-NAD to form NAD. Uses ammonia as a nitrogen source.</text>
</comment>
<comment type="catalytic activity">
    <reaction evidence="1">
        <text>deamido-NAD(+) + NH4(+) + ATP = AMP + diphosphate + NAD(+) + H(+)</text>
        <dbReference type="Rhea" id="RHEA:21188"/>
        <dbReference type="ChEBI" id="CHEBI:15378"/>
        <dbReference type="ChEBI" id="CHEBI:28938"/>
        <dbReference type="ChEBI" id="CHEBI:30616"/>
        <dbReference type="ChEBI" id="CHEBI:33019"/>
        <dbReference type="ChEBI" id="CHEBI:57540"/>
        <dbReference type="ChEBI" id="CHEBI:58437"/>
        <dbReference type="ChEBI" id="CHEBI:456215"/>
        <dbReference type="EC" id="6.3.1.5"/>
    </reaction>
</comment>
<comment type="pathway">
    <text evidence="1">Cofactor biosynthesis; NAD(+) biosynthesis; NAD(+) from deamido-NAD(+) (ammonia route): step 1/1.</text>
</comment>
<comment type="subunit">
    <text evidence="1">Homodimer.</text>
</comment>
<comment type="similarity">
    <text evidence="1">Belongs to the NAD synthetase family.</text>
</comment>
<name>NADE_VIBVY</name>
<evidence type="ECO:0000255" key="1">
    <source>
        <dbReference type="HAMAP-Rule" id="MF_00193"/>
    </source>
</evidence>
<reference key="1">
    <citation type="journal article" date="2003" name="Genome Res.">
        <title>Comparative genome analysis of Vibrio vulnificus, a marine pathogen.</title>
        <authorList>
            <person name="Chen C.-Y."/>
            <person name="Wu K.-M."/>
            <person name="Chang Y.-C."/>
            <person name="Chang C.-H."/>
            <person name="Tsai H.-C."/>
            <person name="Liao T.-L."/>
            <person name="Liu Y.-M."/>
            <person name="Chen H.-J."/>
            <person name="Shen A.B.-T."/>
            <person name="Li J.-C."/>
            <person name="Su T.-L."/>
            <person name="Shao C.-P."/>
            <person name="Lee C.-T."/>
            <person name="Hor L.-I."/>
            <person name="Tsai S.-F."/>
        </authorList>
    </citation>
    <scope>NUCLEOTIDE SEQUENCE [LARGE SCALE GENOMIC DNA]</scope>
    <source>
        <strain>YJ016</strain>
    </source>
</reference>
<feature type="chain" id="PRO_0000152218" description="NH(3)-dependent NAD(+) synthetase">
    <location>
        <begin position="1"/>
        <end position="276"/>
    </location>
</feature>
<feature type="binding site" evidence="1">
    <location>
        <begin position="43"/>
        <end position="50"/>
    </location>
    <ligand>
        <name>ATP</name>
        <dbReference type="ChEBI" id="CHEBI:30616"/>
    </ligand>
</feature>
<feature type="binding site" evidence="1">
    <location>
        <position position="49"/>
    </location>
    <ligand>
        <name>Mg(2+)</name>
        <dbReference type="ChEBI" id="CHEBI:18420"/>
    </ligand>
</feature>
<feature type="binding site" evidence="1">
    <location>
        <position position="146"/>
    </location>
    <ligand>
        <name>deamido-NAD(+)</name>
        <dbReference type="ChEBI" id="CHEBI:58437"/>
    </ligand>
</feature>
<feature type="binding site" evidence="1">
    <location>
        <position position="166"/>
    </location>
    <ligand>
        <name>ATP</name>
        <dbReference type="ChEBI" id="CHEBI:30616"/>
    </ligand>
</feature>
<feature type="binding site" evidence="1">
    <location>
        <position position="171"/>
    </location>
    <ligand>
        <name>Mg(2+)</name>
        <dbReference type="ChEBI" id="CHEBI:18420"/>
    </ligand>
</feature>
<feature type="binding site" evidence="1">
    <location>
        <position position="179"/>
    </location>
    <ligand>
        <name>deamido-NAD(+)</name>
        <dbReference type="ChEBI" id="CHEBI:58437"/>
    </ligand>
</feature>
<feature type="binding site" evidence="1">
    <location>
        <position position="186"/>
    </location>
    <ligand>
        <name>deamido-NAD(+)</name>
        <dbReference type="ChEBI" id="CHEBI:58437"/>
    </ligand>
</feature>
<feature type="binding site" evidence="1">
    <location>
        <position position="195"/>
    </location>
    <ligand>
        <name>ATP</name>
        <dbReference type="ChEBI" id="CHEBI:30616"/>
    </ligand>
</feature>
<feature type="binding site" evidence="1">
    <location>
        <position position="217"/>
    </location>
    <ligand>
        <name>ATP</name>
        <dbReference type="ChEBI" id="CHEBI:30616"/>
    </ligand>
</feature>
<feature type="binding site" evidence="1">
    <location>
        <begin position="266"/>
        <end position="267"/>
    </location>
    <ligand>
        <name>deamido-NAD(+)</name>
        <dbReference type="ChEBI" id="CHEBI:58437"/>
    </ligand>
</feature>
<accession>Q7MFB0</accession>
<organism>
    <name type="scientific">Vibrio vulnificus (strain YJ016)</name>
    <dbReference type="NCBI Taxonomy" id="196600"/>
    <lineage>
        <taxon>Bacteria</taxon>
        <taxon>Pseudomonadati</taxon>
        <taxon>Pseudomonadota</taxon>
        <taxon>Gammaproteobacteria</taxon>
        <taxon>Vibrionales</taxon>
        <taxon>Vibrionaceae</taxon>
        <taxon>Vibrio</taxon>
    </lineage>
</organism>
<gene>
    <name evidence="1" type="primary">nadE</name>
    <name type="ordered locus">VVA0410</name>
</gene>
<proteinExistence type="inferred from homology"/>